<dbReference type="EMBL" id="AP008212">
    <property type="protein sequence ID" value="BAH93583.1"/>
    <property type="molecule type" value="Genomic_DNA"/>
</dbReference>
<dbReference type="EMBL" id="AP014962">
    <property type="protein sequence ID" value="BAS98313.1"/>
    <property type="molecule type" value="Genomic_DNA"/>
</dbReference>
<dbReference type="SMR" id="C7J3A2"/>
<dbReference type="FunCoup" id="C7J3A2">
    <property type="interactions" value="16"/>
</dbReference>
<dbReference type="STRING" id="39947.C7J3A2"/>
<dbReference type="PaxDb" id="39947-C7J3A2"/>
<dbReference type="EnsemblPlants" id="Os06t0570600-00">
    <property type="protein sequence ID" value="Os06t0570600-00"/>
    <property type="gene ID" value="Os06g0570600"/>
</dbReference>
<dbReference type="Gramene" id="Os06t0570600-00">
    <property type="protein sequence ID" value="Os06t0570600-00"/>
    <property type="gene ID" value="Os06g0570600"/>
</dbReference>
<dbReference type="KEGG" id="dosa:Os06g0570632"/>
<dbReference type="eggNOG" id="KOG0156">
    <property type="taxonomic scope" value="Eukaryota"/>
</dbReference>
<dbReference type="HOGENOM" id="CLU_001570_4_0_1"/>
<dbReference type="InParanoid" id="C7J3A2"/>
<dbReference type="OMA" id="RGEEINC"/>
<dbReference type="Proteomes" id="UP000000763">
    <property type="component" value="Chromosome 6"/>
</dbReference>
<dbReference type="Proteomes" id="UP000059680">
    <property type="component" value="Chromosome 6"/>
</dbReference>
<dbReference type="GO" id="GO:0009707">
    <property type="term" value="C:chloroplast outer membrane"/>
    <property type="evidence" value="ECO:0000318"/>
    <property type="project" value="GO_Central"/>
</dbReference>
<dbReference type="GO" id="GO:0052615">
    <property type="term" value="F:ent-kaurene oxidase activity"/>
    <property type="evidence" value="ECO:0007669"/>
    <property type="project" value="InterPro"/>
</dbReference>
<dbReference type="GO" id="GO:0020037">
    <property type="term" value="F:heme binding"/>
    <property type="evidence" value="ECO:0007669"/>
    <property type="project" value="InterPro"/>
</dbReference>
<dbReference type="GO" id="GO:0005506">
    <property type="term" value="F:iron ion binding"/>
    <property type="evidence" value="ECO:0007669"/>
    <property type="project" value="InterPro"/>
</dbReference>
<dbReference type="GO" id="GO:0016709">
    <property type="term" value="F:oxidoreductase activity, acting on paired donors, with incorporation or reduction of molecular oxygen, NAD(P)H as one donor, and incorporation of one atom of oxygen"/>
    <property type="evidence" value="ECO:0000318"/>
    <property type="project" value="GO_Central"/>
</dbReference>
<dbReference type="GO" id="GO:0010241">
    <property type="term" value="P:ent-kaurene oxidation to kaurenoic acid"/>
    <property type="evidence" value="ECO:0000318"/>
    <property type="project" value="GO_Central"/>
</dbReference>
<dbReference type="GO" id="GO:0009686">
    <property type="term" value="P:gibberellin biosynthetic process"/>
    <property type="evidence" value="ECO:0000318"/>
    <property type="project" value="GO_Central"/>
</dbReference>
<dbReference type="FunFam" id="1.10.630.10:FF:000421">
    <property type="entry name" value="Kaurene oxidase2"/>
    <property type="match status" value="1"/>
</dbReference>
<dbReference type="Gene3D" id="1.10.630.10">
    <property type="entry name" value="Cytochrome P450"/>
    <property type="match status" value="1"/>
</dbReference>
<dbReference type="InterPro" id="IPR001128">
    <property type="entry name" value="Cyt_P450"/>
</dbReference>
<dbReference type="InterPro" id="IPR002401">
    <property type="entry name" value="Cyt_P450_E_grp-I"/>
</dbReference>
<dbReference type="InterPro" id="IPR036396">
    <property type="entry name" value="Cyt_P450_sf"/>
</dbReference>
<dbReference type="InterPro" id="IPR044225">
    <property type="entry name" value="KO_chloroplastic"/>
</dbReference>
<dbReference type="PANTHER" id="PTHR47283">
    <property type="entry name" value="ENT-KAURENE OXIDASE, CHLOROPLASTIC"/>
    <property type="match status" value="1"/>
</dbReference>
<dbReference type="PANTHER" id="PTHR47283:SF1">
    <property type="entry name" value="ENT-KAURENE OXIDASE, CHLOROPLASTIC"/>
    <property type="match status" value="1"/>
</dbReference>
<dbReference type="Pfam" id="PF00067">
    <property type="entry name" value="p450"/>
    <property type="match status" value="1"/>
</dbReference>
<dbReference type="PRINTS" id="PR00463">
    <property type="entry name" value="EP450I"/>
</dbReference>
<dbReference type="SUPFAM" id="SSF48264">
    <property type="entry name" value="Cytochrome P450"/>
    <property type="match status" value="1"/>
</dbReference>
<feature type="chain" id="PRO_0000430735" description="Ent-kaurene oxidase-like protein 1">
    <location>
        <begin position="1"/>
        <end position="299"/>
    </location>
</feature>
<feature type="transmembrane region" description="Helical" evidence="1">
    <location>
        <begin position="16"/>
        <end position="36"/>
    </location>
</feature>
<comment type="subcellular location">
    <subcellularLocation>
        <location evidence="1">Membrane</location>
        <topology evidence="1">Single-pass membrane protein</topology>
    </subcellularLocation>
</comment>
<comment type="tissue specificity">
    <text evidence="3">Expressed in roots and panicles.</text>
</comment>
<comment type="similarity">
    <text evidence="2">Belongs to the cytochrome P450 family.</text>
</comment>
<comment type="caution">
    <text evidence="5">Could be the product of a pseudogene. In contrast to other members of the family, it is shorter at the C-terminus and lacks the heme-binding sites.</text>
</comment>
<proteinExistence type="uncertain"/>
<evidence type="ECO:0000255" key="1"/>
<evidence type="ECO:0000255" key="2">
    <source>
        <dbReference type="RuleBase" id="RU000461"/>
    </source>
</evidence>
<evidence type="ECO:0000269" key="3">
    <source>
    </source>
</evidence>
<evidence type="ECO:0000303" key="4">
    <source>
    </source>
</evidence>
<evidence type="ECO:0000305" key="5"/>
<evidence type="ECO:0000312" key="6">
    <source>
        <dbReference type="EMBL" id="BAH93583.1"/>
    </source>
</evidence>
<sequence length="299" mass="33113">MEAFVSGGAGGVGAAAVVGVFVAAAVVGGFVAAVALAERAGVIAPRKRPNAPPAVPGLPIIGNLHQLKEKKPHQTFTKWAEIYGPIYTIRIGASSVVVLNSTEVAKEAMVAKFSSISTRKLSKALTVLTRDKSMVATSDYGDFHKMVKRYVMSSTLGTSAQKKFRDTRDMMINNMLSTFHKLVKDDPHVPLIFRDVFKDELFRLSMIQSLGEDVSSVYVDEFGRDISKEEIYNATVTDMMMCAIEVDWRDFFSYLSWVPNKSFETRVFTAEARRTAVMRALIKQQKERIVRGEVTKCIL</sequence>
<keyword id="KW-0472">Membrane</keyword>
<keyword id="KW-1185">Reference proteome</keyword>
<keyword id="KW-0812">Transmembrane</keyword>
<keyword id="KW-1133">Transmembrane helix</keyword>
<reference key="1">
    <citation type="journal article" date="2005" name="Nature">
        <title>The map-based sequence of the rice genome.</title>
        <authorList>
            <consortium name="International rice genome sequencing project (IRGSP)"/>
        </authorList>
    </citation>
    <scope>NUCLEOTIDE SEQUENCE [LARGE SCALE GENOMIC DNA]</scope>
    <source>
        <strain>cv. Nipponbare</strain>
    </source>
</reference>
<reference key="2">
    <citation type="journal article" date="2008" name="Nucleic Acids Res.">
        <title>The rice annotation project database (RAP-DB): 2008 update.</title>
        <authorList>
            <consortium name="The rice annotation project (RAP)"/>
        </authorList>
    </citation>
    <scope>GENOME REANNOTATION</scope>
    <source>
        <strain>cv. Nipponbare</strain>
    </source>
</reference>
<reference key="3">
    <citation type="journal article" date="2013" name="Rice">
        <title>Improvement of the Oryza sativa Nipponbare reference genome using next generation sequence and optical map data.</title>
        <authorList>
            <person name="Kawahara Y."/>
            <person name="de la Bastide M."/>
            <person name="Hamilton J.P."/>
            <person name="Kanamori H."/>
            <person name="McCombie W.R."/>
            <person name="Ouyang S."/>
            <person name="Schwartz D.C."/>
            <person name="Tanaka T."/>
            <person name="Wu J."/>
            <person name="Zhou S."/>
            <person name="Childs K.L."/>
            <person name="Davidson R.M."/>
            <person name="Lin H."/>
            <person name="Quesada-Ocampo L."/>
            <person name="Vaillancourt B."/>
            <person name="Sakai H."/>
            <person name="Lee S.S."/>
            <person name="Kim J."/>
            <person name="Numa H."/>
            <person name="Itoh T."/>
            <person name="Buell C.R."/>
            <person name="Matsumoto T."/>
        </authorList>
    </citation>
    <scope>GENOME REANNOTATION</scope>
    <source>
        <strain>cv. Nipponbare</strain>
    </source>
</reference>
<reference key="4">
    <citation type="journal article" date="2004" name="Plant Mol. Biol.">
        <title>A rice semi-dwarf gene, Tan-Ginbozu (D35), encodes the gibberellin biosynthesis enzyme, ent-kaurene oxidase.</title>
        <authorList>
            <person name="Itoh H."/>
            <person name="Tatsumi T."/>
            <person name="Sakamoto T."/>
            <person name="Otomo K."/>
            <person name="Toyomasu T."/>
            <person name="Kitano H."/>
            <person name="Ashikari M."/>
            <person name="Ichihara S."/>
            <person name="Matsuoka M."/>
        </authorList>
    </citation>
    <scope>TISSUE SPECIFICITY</scope>
</reference>
<gene>
    <name evidence="5" type="primary">CYP701A7</name>
    <name evidence="4" type="synonym">KO1</name>
    <name evidence="4" type="synonym">KOL1</name>
    <name evidence="6" type="ordered locus">Os06g0570600</name>
</gene>
<accession>C7J3A2</accession>
<accession>A0A0N7KMB0</accession>
<name>C7017_ORYSJ</name>
<protein>
    <recommendedName>
        <fullName evidence="4">Ent-kaurene oxidase-like protein 1</fullName>
        <shortName evidence="4">OsKOL1</shortName>
    </recommendedName>
    <alternativeName>
        <fullName evidence="5">Cytochrome P450 701A7</fullName>
    </alternativeName>
</protein>
<organism>
    <name type="scientific">Oryza sativa subsp. japonica</name>
    <name type="common">Rice</name>
    <dbReference type="NCBI Taxonomy" id="39947"/>
    <lineage>
        <taxon>Eukaryota</taxon>
        <taxon>Viridiplantae</taxon>
        <taxon>Streptophyta</taxon>
        <taxon>Embryophyta</taxon>
        <taxon>Tracheophyta</taxon>
        <taxon>Spermatophyta</taxon>
        <taxon>Magnoliopsida</taxon>
        <taxon>Liliopsida</taxon>
        <taxon>Poales</taxon>
        <taxon>Poaceae</taxon>
        <taxon>BOP clade</taxon>
        <taxon>Oryzoideae</taxon>
        <taxon>Oryzeae</taxon>
        <taxon>Oryzinae</taxon>
        <taxon>Oryza</taxon>
        <taxon>Oryza sativa</taxon>
    </lineage>
</organism>